<protein>
    <recommendedName>
        <fullName evidence="1">Flagellar P-ring protein</fullName>
    </recommendedName>
    <alternativeName>
        <fullName evidence="1">Basal body P-ring protein</fullName>
    </alternativeName>
</protein>
<sequence>MKYKLVLAVAVLVFSLPSQAERIKDIANVQGVRSNQLIGYGLVVGLPGTGEKTSYTEQTFMTMLKNFGINLPDNVKPKIKNVAVVAVHADMPAFIKPGQDLDVTVSSLGEAKSLRGGTLLQTFLKGVDGNVYAIAQGSLVVSGFSADGLDGSKVIQNTPTVGRIPNGAIVERSVATPFSTGDYLTFNLRRSDFSTAQRMADAINELLGPDMARPLDATSVQVSAPRDVSQRVSFLATLENLDVIPAEESAKVIVNSRTGTIVVGQNVRLLPAAITHGGMTVTIAEATQVSQPNALANGQTTVTSNSTITATESDRRMFMFNPGTTLDELVRAVNLVGAAPSDVLAILEALKVAGALHGELIII</sequence>
<proteinExistence type="inferred from homology"/>
<keyword id="KW-0975">Bacterial flagellum</keyword>
<keyword id="KW-0574">Periplasm</keyword>
<keyword id="KW-0732">Signal</keyword>
<organism>
    <name type="scientific">Shewanella baltica (strain OS223)</name>
    <dbReference type="NCBI Taxonomy" id="407976"/>
    <lineage>
        <taxon>Bacteria</taxon>
        <taxon>Pseudomonadati</taxon>
        <taxon>Pseudomonadota</taxon>
        <taxon>Gammaproteobacteria</taxon>
        <taxon>Alteromonadales</taxon>
        <taxon>Shewanellaceae</taxon>
        <taxon>Shewanella</taxon>
    </lineage>
</organism>
<feature type="signal peptide" evidence="1">
    <location>
        <begin position="1"/>
        <end position="20"/>
    </location>
</feature>
<feature type="chain" id="PRO_5000424008" description="Flagellar P-ring protein">
    <location>
        <begin position="21"/>
        <end position="363"/>
    </location>
</feature>
<gene>
    <name evidence="1" type="primary">flgI</name>
    <name type="ordered locus">Sbal223_1423</name>
</gene>
<evidence type="ECO:0000255" key="1">
    <source>
        <dbReference type="HAMAP-Rule" id="MF_00416"/>
    </source>
</evidence>
<dbReference type="EMBL" id="CP001252">
    <property type="protein sequence ID" value="ACK45930.1"/>
    <property type="molecule type" value="Genomic_DNA"/>
</dbReference>
<dbReference type="RefSeq" id="WP_006082420.1">
    <property type="nucleotide sequence ID" value="NC_011663.1"/>
</dbReference>
<dbReference type="SMR" id="B8E9X6"/>
<dbReference type="KEGG" id="sbp:Sbal223_1423"/>
<dbReference type="HOGENOM" id="CLU_045235_1_0_6"/>
<dbReference type="Proteomes" id="UP000002507">
    <property type="component" value="Chromosome"/>
</dbReference>
<dbReference type="GO" id="GO:0009428">
    <property type="term" value="C:bacterial-type flagellum basal body, distal rod, P ring"/>
    <property type="evidence" value="ECO:0007669"/>
    <property type="project" value="InterPro"/>
</dbReference>
<dbReference type="GO" id="GO:0030288">
    <property type="term" value="C:outer membrane-bounded periplasmic space"/>
    <property type="evidence" value="ECO:0007669"/>
    <property type="project" value="InterPro"/>
</dbReference>
<dbReference type="GO" id="GO:0005198">
    <property type="term" value="F:structural molecule activity"/>
    <property type="evidence" value="ECO:0007669"/>
    <property type="project" value="InterPro"/>
</dbReference>
<dbReference type="GO" id="GO:0071973">
    <property type="term" value="P:bacterial-type flagellum-dependent cell motility"/>
    <property type="evidence" value="ECO:0007669"/>
    <property type="project" value="InterPro"/>
</dbReference>
<dbReference type="HAMAP" id="MF_00416">
    <property type="entry name" value="FlgI"/>
    <property type="match status" value="1"/>
</dbReference>
<dbReference type="InterPro" id="IPR001782">
    <property type="entry name" value="Flag_FlgI"/>
</dbReference>
<dbReference type="NCBIfam" id="NF003676">
    <property type="entry name" value="PRK05303.1"/>
    <property type="match status" value="1"/>
</dbReference>
<dbReference type="PANTHER" id="PTHR30381">
    <property type="entry name" value="FLAGELLAR P-RING PERIPLASMIC PROTEIN FLGI"/>
    <property type="match status" value="1"/>
</dbReference>
<dbReference type="PANTHER" id="PTHR30381:SF0">
    <property type="entry name" value="FLAGELLAR P-RING PROTEIN"/>
    <property type="match status" value="1"/>
</dbReference>
<dbReference type="Pfam" id="PF02119">
    <property type="entry name" value="FlgI"/>
    <property type="match status" value="1"/>
</dbReference>
<dbReference type="PRINTS" id="PR01010">
    <property type="entry name" value="FLGPRINGFLGI"/>
</dbReference>
<accession>B8E9X6</accession>
<reference key="1">
    <citation type="submission" date="2008-12" db="EMBL/GenBank/DDBJ databases">
        <title>Complete sequence of chromosome of Shewanella baltica OS223.</title>
        <authorList>
            <consortium name="US DOE Joint Genome Institute"/>
            <person name="Lucas S."/>
            <person name="Copeland A."/>
            <person name="Lapidus A."/>
            <person name="Glavina del Rio T."/>
            <person name="Dalin E."/>
            <person name="Tice H."/>
            <person name="Bruce D."/>
            <person name="Goodwin L."/>
            <person name="Pitluck S."/>
            <person name="Chertkov O."/>
            <person name="Meincke L."/>
            <person name="Brettin T."/>
            <person name="Detter J.C."/>
            <person name="Han C."/>
            <person name="Kuske C.R."/>
            <person name="Larimer F."/>
            <person name="Land M."/>
            <person name="Hauser L."/>
            <person name="Kyrpides N."/>
            <person name="Ovchinnikova G."/>
            <person name="Brettar I."/>
            <person name="Rodrigues J."/>
            <person name="Konstantinidis K."/>
            <person name="Tiedje J."/>
        </authorList>
    </citation>
    <scope>NUCLEOTIDE SEQUENCE [LARGE SCALE GENOMIC DNA]</scope>
    <source>
        <strain>OS223</strain>
    </source>
</reference>
<comment type="function">
    <text evidence="1">Assembles around the rod to form the L-ring and probably protects the motor/basal body from shearing forces during rotation.</text>
</comment>
<comment type="subunit">
    <text evidence="1">The basal body constitutes a major portion of the flagellar organelle and consists of four rings (L,P,S, and M) mounted on a central rod.</text>
</comment>
<comment type="subcellular location">
    <subcellularLocation>
        <location evidence="1">Periplasm</location>
    </subcellularLocation>
    <subcellularLocation>
        <location evidence="1">Bacterial flagellum basal body</location>
    </subcellularLocation>
</comment>
<comment type="similarity">
    <text evidence="1">Belongs to the FlgI family.</text>
</comment>
<name>FLGI_SHEB2</name>